<feature type="chain" id="PRO_0000226436" description="ATP-dependent Clp protease proteolytic subunit 2">
    <location>
        <begin position="1"/>
        <end position="203"/>
    </location>
</feature>
<feature type="active site" description="Nucleophile" evidence="1">
    <location>
        <position position="98"/>
    </location>
</feature>
<feature type="active site" evidence="1">
    <location>
        <position position="123"/>
    </location>
</feature>
<dbReference type="EC" id="3.4.21.92" evidence="1"/>
<dbReference type="EMBL" id="CP000051">
    <property type="protein sequence ID" value="AAX50984.1"/>
    <property type="molecule type" value="Genomic_DNA"/>
</dbReference>
<dbReference type="RefSeq" id="WP_009872081.1">
    <property type="nucleotide sequence ID" value="NC_007429.1"/>
</dbReference>
<dbReference type="PDB" id="8DLA">
    <property type="method" value="X-ray"/>
    <property type="resolution" value="2.66 A"/>
    <property type="chains" value="A/B/C/D/E/F/G/H/I/J/K/L/M/N=1-203"/>
</dbReference>
<dbReference type="PDBsum" id="8DLA"/>
<dbReference type="SMR" id="Q3KKY8"/>
<dbReference type="MEROPS" id="S14.001"/>
<dbReference type="KEGG" id="cta:CTA_0767"/>
<dbReference type="HOGENOM" id="CLU_058707_3_2_0"/>
<dbReference type="Proteomes" id="UP000002532">
    <property type="component" value="Chromosome"/>
</dbReference>
<dbReference type="GO" id="GO:0005737">
    <property type="term" value="C:cytoplasm"/>
    <property type="evidence" value="ECO:0007669"/>
    <property type="project" value="UniProtKB-SubCell"/>
</dbReference>
<dbReference type="GO" id="GO:0009368">
    <property type="term" value="C:endopeptidase Clp complex"/>
    <property type="evidence" value="ECO:0007669"/>
    <property type="project" value="TreeGrafter"/>
</dbReference>
<dbReference type="GO" id="GO:0004176">
    <property type="term" value="F:ATP-dependent peptidase activity"/>
    <property type="evidence" value="ECO:0007669"/>
    <property type="project" value="InterPro"/>
</dbReference>
<dbReference type="GO" id="GO:0051117">
    <property type="term" value="F:ATPase binding"/>
    <property type="evidence" value="ECO:0007669"/>
    <property type="project" value="TreeGrafter"/>
</dbReference>
<dbReference type="GO" id="GO:0004252">
    <property type="term" value="F:serine-type endopeptidase activity"/>
    <property type="evidence" value="ECO:0007669"/>
    <property type="project" value="UniProtKB-UniRule"/>
</dbReference>
<dbReference type="GO" id="GO:0006515">
    <property type="term" value="P:protein quality control for misfolded or incompletely synthesized proteins"/>
    <property type="evidence" value="ECO:0007669"/>
    <property type="project" value="TreeGrafter"/>
</dbReference>
<dbReference type="CDD" id="cd07017">
    <property type="entry name" value="S14_ClpP_2"/>
    <property type="match status" value="1"/>
</dbReference>
<dbReference type="FunFam" id="3.90.226.10:FF:000001">
    <property type="entry name" value="ATP-dependent Clp protease proteolytic subunit"/>
    <property type="match status" value="1"/>
</dbReference>
<dbReference type="Gene3D" id="3.90.226.10">
    <property type="entry name" value="2-enoyl-CoA Hydratase, Chain A, domain 1"/>
    <property type="match status" value="1"/>
</dbReference>
<dbReference type="HAMAP" id="MF_00444">
    <property type="entry name" value="ClpP"/>
    <property type="match status" value="1"/>
</dbReference>
<dbReference type="InterPro" id="IPR001907">
    <property type="entry name" value="ClpP"/>
</dbReference>
<dbReference type="InterPro" id="IPR029045">
    <property type="entry name" value="ClpP/crotonase-like_dom_sf"/>
</dbReference>
<dbReference type="InterPro" id="IPR023562">
    <property type="entry name" value="ClpP/TepA"/>
</dbReference>
<dbReference type="InterPro" id="IPR033135">
    <property type="entry name" value="ClpP_His_AS"/>
</dbReference>
<dbReference type="InterPro" id="IPR018215">
    <property type="entry name" value="ClpP_Ser_AS"/>
</dbReference>
<dbReference type="NCBIfam" id="NF001368">
    <property type="entry name" value="PRK00277.1"/>
    <property type="match status" value="1"/>
</dbReference>
<dbReference type="NCBIfam" id="NF009205">
    <property type="entry name" value="PRK12553.1"/>
    <property type="match status" value="1"/>
</dbReference>
<dbReference type="PANTHER" id="PTHR10381">
    <property type="entry name" value="ATP-DEPENDENT CLP PROTEASE PROTEOLYTIC SUBUNIT"/>
    <property type="match status" value="1"/>
</dbReference>
<dbReference type="PANTHER" id="PTHR10381:SF70">
    <property type="entry name" value="ATP-DEPENDENT CLP PROTEASE PROTEOLYTIC SUBUNIT"/>
    <property type="match status" value="1"/>
</dbReference>
<dbReference type="Pfam" id="PF00574">
    <property type="entry name" value="CLP_protease"/>
    <property type="match status" value="1"/>
</dbReference>
<dbReference type="PRINTS" id="PR00127">
    <property type="entry name" value="CLPPROTEASEP"/>
</dbReference>
<dbReference type="SUPFAM" id="SSF52096">
    <property type="entry name" value="ClpP/crotonase"/>
    <property type="match status" value="1"/>
</dbReference>
<dbReference type="PROSITE" id="PS00382">
    <property type="entry name" value="CLP_PROTEASE_HIS"/>
    <property type="match status" value="1"/>
</dbReference>
<dbReference type="PROSITE" id="PS00381">
    <property type="entry name" value="CLP_PROTEASE_SER"/>
    <property type="match status" value="1"/>
</dbReference>
<evidence type="ECO:0000255" key="1">
    <source>
        <dbReference type="HAMAP-Rule" id="MF_00444"/>
    </source>
</evidence>
<proteinExistence type="evidence at protein level"/>
<name>CLPP2_CHLTA</name>
<organism>
    <name type="scientific">Chlamydia trachomatis serovar A (strain ATCC VR-571B / DSM 19440 / HAR-13)</name>
    <dbReference type="NCBI Taxonomy" id="315277"/>
    <lineage>
        <taxon>Bacteria</taxon>
        <taxon>Pseudomonadati</taxon>
        <taxon>Chlamydiota</taxon>
        <taxon>Chlamydiia</taxon>
        <taxon>Chlamydiales</taxon>
        <taxon>Chlamydiaceae</taxon>
        <taxon>Chlamydia/Chlamydophila group</taxon>
        <taxon>Chlamydia</taxon>
    </lineage>
</organism>
<gene>
    <name evidence="1" type="primary">clpP2</name>
    <name type="ordered locus">CTA_0767</name>
</gene>
<accession>Q3KKY8</accession>
<comment type="function">
    <text evidence="1">Cleaves peptides in various proteins in a process that requires ATP hydrolysis. Has a chymotrypsin-like activity. Plays a major role in the degradation of misfolded proteins.</text>
</comment>
<comment type="catalytic activity">
    <reaction evidence="1">
        <text>Hydrolysis of proteins to small peptides in the presence of ATP and magnesium. alpha-casein is the usual test substrate. In the absence of ATP, only oligopeptides shorter than five residues are hydrolyzed (such as succinyl-Leu-Tyr-|-NHMec, and Leu-Tyr-Leu-|-Tyr-Trp, in which cleavage of the -Tyr-|-Leu- and -Tyr-|-Trp bonds also occurs).</text>
        <dbReference type="EC" id="3.4.21.92"/>
    </reaction>
</comment>
<comment type="subunit">
    <text evidence="1">Fourteen ClpP subunits assemble into 2 heptameric rings which stack back to back to give a disk-like structure with a central cavity, resembling the structure of eukaryotic proteasomes.</text>
</comment>
<comment type="subcellular location">
    <subcellularLocation>
        <location evidence="1">Cytoplasm</location>
    </subcellularLocation>
</comment>
<comment type="similarity">
    <text evidence="1">Belongs to the peptidase S14 family.</text>
</comment>
<reference key="1">
    <citation type="journal article" date="2005" name="Infect. Immun.">
        <title>Comparative genomic analysis of Chlamydia trachomatis oculotropic and genitotropic strains.</title>
        <authorList>
            <person name="Carlson J.H."/>
            <person name="Porcella S.F."/>
            <person name="McClarty G."/>
            <person name="Caldwell H.D."/>
        </authorList>
    </citation>
    <scope>NUCLEOTIDE SEQUENCE [LARGE SCALE GENOMIC DNA]</scope>
    <source>
        <strain>ATCC VR-571B / DSM 19440 / HAR-13</strain>
    </source>
</reference>
<sequence length="203" mass="22049">MTLVPYVVEDTGRGERAMDIYSRLLKDRIVMIGQEITEPLANTVIAQLLFLMSEDPTKDIQIFINSPGGYITAGLAIYDTIRFLGCDVNTYCIGQAASMGALLLSAGTKGKRYALPHSRMMIHQPSGGIIGTSADIQLQAAEILTLKKHLSNILAECTGQSVEKIIEDSERDFFMGAEEAIAYGLIDKVISSAKETKDKSIAS</sequence>
<protein>
    <recommendedName>
        <fullName evidence="1">ATP-dependent Clp protease proteolytic subunit 2</fullName>
        <ecNumber evidence="1">3.4.21.92</ecNumber>
    </recommendedName>
    <alternativeName>
        <fullName evidence="1">Endopeptidase Clp 2</fullName>
    </alternativeName>
</protein>
<keyword id="KW-0002">3D-structure</keyword>
<keyword id="KW-0963">Cytoplasm</keyword>
<keyword id="KW-0378">Hydrolase</keyword>
<keyword id="KW-0645">Protease</keyword>
<keyword id="KW-0720">Serine protease</keyword>